<protein>
    <recommendedName>
        <fullName evidence="1">DNA primase</fullName>
        <ecNumber evidence="1">2.7.7.101</ecNumber>
    </recommendedName>
</protein>
<accession>Q9CLI9</accession>
<organism>
    <name type="scientific">Pasteurella multocida (strain Pm70)</name>
    <dbReference type="NCBI Taxonomy" id="272843"/>
    <lineage>
        <taxon>Bacteria</taxon>
        <taxon>Pseudomonadati</taxon>
        <taxon>Pseudomonadota</taxon>
        <taxon>Gammaproteobacteria</taxon>
        <taxon>Pasteurellales</taxon>
        <taxon>Pasteurellaceae</taxon>
        <taxon>Pasteurella</taxon>
    </lineage>
</organism>
<comment type="function">
    <text evidence="1">RNA polymerase that catalyzes the synthesis of short RNA molecules used as primers for DNA polymerase during DNA replication.</text>
</comment>
<comment type="catalytic activity">
    <reaction evidence="1">
        <text>ssDNA + n NTP = ssDNA/pppN(pN)n-1 hybrid + (n-1) diphosphate.</text>
        <dbReference type="EC" id="2.7.7.101"/>
    </reaction>
</comment>
<comment type="cofactor">
    <cofactor evidence="1">
        <name>Zn(2+)</name>
        <dbReference type="ChEBI" id="CHEBI:29105"/>
    </cofactor>
    <text evidence="1">Binds 1 zinc ion per monomer.</text>
</comment>
<comment type="cofactor">
    <cofactor evidence="1">
        <name>Mg(2+)</name>
        <dbReference type="ChEBI" id="CHEBI:18420"/>
    </cofactor>
    <text evidence="1">Binds two Mg(2+) per subunit.</text>
</comment>
<comment type="subunit">
    <text evidence="1">Monomer. Interacts with DnaB.</text>
</comment>
<comment type="domain">
    <text evidence="1">Contains an N-terminal zinc-binding domain, a central core domain that contains the primase activity, and a C-terminal DnaB-binding domain.</text>
</comment>
<comment type="similarity">
    <text evidence="1">Belongs to the DnaG primase family.</text>
</comment>
<sequence length="582" mass="66308">MKGSIPRTFIDDLLAKTDIVELVNSRVKLKKAGRDYQACCPFHHEKTPSFTVSQKKQFYHCFGCGAHGNAISFLMEYDKLEFVEAIEELAGMLGLEIPRENKPHFHGKQINLQTKRNLYELMQEIAQFYQQQLAQHIPAQSYLQQRGLSPEVISRFQIGFVPNSFDAVLQRFGQQKEDQQKLFDLGMLSRSEQGKIYDRFRHRIMFPIRDRRGKTIAFGGRVLGDEKPKYLNSPESATYHKGNELYGLYEALQANESPEMLLVVEGYMDVVALAQFGVDYAVASLGTATTAEQIQLLFRSTEQAICCYDGDRAGREAAWRAFENALPYLEDGRQLKFVFLPDGEDPDSFIRQHGKASFEQYMQKALSLSEFLFTSLAPQVDFSSKEGKTKLAALAVPLIKKIPGDMLRLSLRNTLAQKLGILDQAQLESLIPSYSEMKITASPQPVKRTPMRVLIGLLLQNPELAQLVPDLSPLRTLNEPGLDLLEKLTALCQEKVGITTGQILEYWRDTEHSKALEILASWNHLVEDTQIEETFKSTLRYLYFQLIEHEIDLLIAKDRSEGLNMNERKKLTQLLVKKQQKA</sequence>
<feature type="chain" id="PRO_0000180511" description="DNA primase">
    <location>
        <begin position="1"/>
        <end position="582"/>
    </location>
</feature>
<feature type="domain" description="Toprim" evidence="1">
    <location>
        <begin position="259"/>
        <end position="341"/>
    </location>
</feature>
<feature type="zinc finger region" description="CHC2-type" evidence="1">
    <location>
        <begin position="40"/>
        <end position="64"/>
    </location>
</feature>
<feature type="binding site" evidence="1">
    <location>
        <position position="265"/>
    </location>
    <ligand>
        <name>Mg(2+)</name>
        <dbReference type="ChEBI" id="CHEBI:18420"/>
        <label>1</label>
        <note>catalytic</note>
    </ligand>
</feature>
<feature type="binding site" evidence="1">
    <location>
        <position position="309"/>
    </location>
    <ligand>
        <name>Mg(2+)</name>
        <dbReference type="ChEBI" id="CHEBI:18420"/>
        <label>1</label>
        <note>catalytic</note>
    </ligand>
</feature>
<feature type="binding site" evidence="1">
    <location>
        <position position="309"/>
    </location>
    <ligand>
        <name>Mg(2+)</name>
        <dbReference type="ChEBI" id="CHEBI:18420"/>
        <label>2</label>
    </ligand>
</feature>
<feature type="binding site" evidence="1">
    <location>
        <position position="311"/>
    </location>
    <ligand>
        <name>Mg(2+)</name>
        <dbReference type="ChEBI" id="CHEBI:18420"/>
        <label>2</label>
    </ligand>
</feature>
<name>DNAG_PASMU</name>
<reference key="1">
    <citation type="journal article" date="2001" name="Proc. Natl. Acad. Sci. U.S.A.">
        <title>Complete genomic sequence of Pasteurella multocida Pm70.</title>
        <authorList>
            <person name="May B.J."/>
            <person name="Zhang Q."/>
            <person name="Li L.L."/>
            <person name="Paustian M.L."/>
            <person name="Whittam T.S."/>
            <person name="Kapur V."/>
        </authorList>
    </citation>
    <scope>NUCLEOTIDE SEQUENCE [LARGE SCALE GENOMIC DNA]</scope>
    <source>
        <strain>Pm70</strain>
    </source>
</reference>
<gene>
    <name evidence="1" type="primary">dnaG</name>
    <name type="ordered locus">PM1240</name>
</gene>
<proteinExistence type="inferred from homology"/>
<evidence type="ECO:0000255" key="1">
    <source>
        <dbReference type="HAMAP-Rule" id="MF_00974"/>
    </source>
</evidence>
<dbReference type="EC" id="2.7.7.101" evidence="1"/>
<dbReference type="EMBL" id="AE004439">
    <property type="protein sequence ID" value="AAK03324.1"/>
    <property type="molecule type" value="Genomic_DNA"/>
</dbReference>
<dbReference type="RefSeq" id="WP_010907088.1">
    <property type="nucleotide sequence ID" value="NC_002663.1"/>
</dbReference>
<dbReference type="SMR" id="Q9CLI9"/>
<dbReference type="STRING" id="272843.PM1240"/>
<dbReference type="EnsemblBacteria" id="AAK03324">
    <property type="protein sequence ID" value="AAK03324"/>
    <property type="gene ID" value="PM1240"/>
</dbReference>
<dbReference type="KEGG" id="pmu:PM1240"/>
<dbReference type="PATRIC" id="fig|272843.6.peg.1250"/>
<dbReference type="HOGENOM" id="CLU_013501_5_1_6"/>
<dbReference type="OrthoDB" id="9803773at2"/>
<dbReference type="Proteomes" id="UP000000809">
    <property type="component" value="Chromosome"/>
</dbReference>
<dbReference type="GO" id="GO:0005737">
    <property type="term" value="C:cytoplasm"/>
    <property type="evidence" value="ECO:0007669"/>
    <property type="project" value="TreeGrafter"/>
</dbReference>
<dbReference type="GO" id="GO:0000428">
    <property type="term" value="C:DNA-directed RNA polymerase complex"/>
    <property type="evidence" value="ECO:0007669"/>
    <property type="project" value="UniProtKB-KW"/>
</dbReference>
<dbReference type="GO" id="GO:1990077">
    <property type="term" value="C:primosome complex"/>
    <property type="evidence" value="ECO:0007669"/>
    <property type="project" value="UniProtKB-KW"/>
</dbReference>
<dbReference type="GO" id="GO:0003677">
    <property type="term" value="F:DNA binding"/>
    <property type="evidence" value="ECO:0007669"/>
    <property type="project" value="UniProtKB-KW"/>
</dbReference>
<dbReference type="GO" id="GO:0003899">
    <property type="term" value="F:DNA-directed RNA polymerase activity"/>
    <property type="evidence" value="ECO:0007669"/>
    <property type="project" value="InterPro"/>
</dbReference>
<dbReference type="GO" id="GO:0008270">
    <property type="term" value="F:zinc ion binding"/>
    <property type="evidence" value="ECO:0007669"/>
    <property type="project" value="UniProtKB-UniRule"/>
</dbReference>
<dbReference type="GO" id="GO:0006269">
    <property type="term" value="P:DNA replication, synthesis of primer"/>
    <property type="evidence" value="ECO:0007669"/>
    <property type="project" value="UniProtKB-UniRule"/>
</dbReference>
<dbReference type="CDD" id="cd03364">
    <property type="entry name" value="TOPRIM_DnaG_primases"/>
    <property type="match status" value="1"/>
</dbReference>
<dbReference type="FunFam" id="3.40.1360.10:FF:000002">
    <property type="entry name" value="DNA primase"/>
    <property type="match status" value="1"/>
</dbReference>
<dbReference type="FunFam" id="3.90.580.10:FF:000001">
    <property type="entry name" value="DNA primase"/>
    <property type="match status" value="1"/>
</dbReference>
<dbReference type="FunFam" id="3.90.980.10:FF:000001">
    <property type="entry name" value="DNA primase"/>
    <property type="match status" value="1"/>
</dbReference>
<dbReference type="Gene3D" id="3.40.1360.10">
    <property type="match status" value="1"/>
</dbReference>
<dbReference type="Gene3D" id="3.90.980.10">
    <property type="entry name" value="DNA primase, catalytic core, N-terminal domain"/>
    <property type="match status" value="1"/>
</dbReference>
<dbReference type="Gene3D" id="1.10.860.10">
    <property type="entry name" value="DNAb Helicase, Chain A"/>
    <property type="match status" value="1"/>
</dbReference>
<dbReference type="Gene3D" id="1.20.50.20">
    <property type="entry name" value="DnaG, RNA polymerase domain, helical bundle"/>
    <property type="match status" value="1"/>
</dbReference>
<dbReference type="Gene3D" id="3.90.580.10">
    <property type="entry name" value="Zinc finger, CHC2-type domain"/>
    <property type="match status" value="1"/>
</dbReference>
<dbReference type="HAMAP" id="MF_00974">
    <property type="entry name" value="DNA_primase_DnaG"/>
    <property type="match status" value="1"/>
</dbReference>
<dbReference type="InterPro" id="IPR016136">
    <property type="entry name" value="DNA_helicase_N/primase_C"/>
</dbReference>
<dbReference type="InterPro" id="IPR037068">
    <property type="entry name" value="DNA_primase_core_N_sf"/>
</dbReference>
<dbReference type="InterPro" id="IPR019475">
    <property type="entry name" value="DNA_primase_DnaB-bd"/>
</dbReference>
<dbReference type="InterPro" id="IPR006295">
    <property type="entry name" value="DNA_primase_DnaG"/>
</dbReference>
<dbReference type="InterPro" id="IPR013173">
    <property type="entry name" value="DNA_primase_DnaG_DnaB-bd_dom"/>
</dbReference>
<dbReference type="InterPro" id="IPR036977">
    <property type="entry name" value="DNA_primase_Znf_CHC2"/>
</dbReference>
<dbReference type="InterPro" id="IPR030846">
    <property type="entry name" value="DnaG_bac"/>
</dbReference>
<dbReference type="InterPro" id="IPR013264">
    <property type="entry name" value="DNAG_N"/>
</dbReference>
<dbReference type="InterPro" id="IPR050219">
    <property type="entry name" value="DnaG_primase"/>
</dbReference>
<dbReference type="InterPro" id="IPR034151">
    <property type="entry name" value="TOPRIM_DnaG_bac"/>
</dbReference>
<dbReference type="InterPro" id="IPR006171">
    <property type="entry name" value="TOPRIM_dom"/>
</dbReference>
<dbReference type="InterPro" id="IPR002694">
    <property type="entry name" value="Znf_CHC2"/>
</dbReference>
<dbReference type="NCBIfam" id="TIGR01391">
    <property type="entry name" value="dnaG"/>
    <property type="match status" value="1"/>
</dbReference>
<dbReference type="PANTHER" id="PTHR30313">
    <property type="entry name" value="DNA PRIMASE"/>
    <property type="match status" value="1"/>
</dbReference>
<dbReference type="PANTHER" id="PTHR30313:SF2">
    <property type="entry name" value="DNA PRIMASE"/>
    <property type="match status" value="1"/>
</dbReference>
<dbReference type="Pfam" id="PF10410">
    <property type="entry name" value="DnaB_bind"/>
    <property type="match status" value="1"/>
</dbReference>
<dbReference type="Pfam" id="PF08278">
    <property type="entry name" value="DnaG_DnaB_bind"/>
    <property type="match status" value="1"/>
</dbReference>
<dbReference type="Pfam" id="PF08275">
    <property type="entry name" value="DNAG_N"/>
    <property type="match status" value="1"/>
</dbReference>
<dbReference type="Pfam" id="PF13155">
    <property type="entry name" value="Toprim_2"/>
    <property type="match status" value="1"/>
</dbReference>
<dbReference type="Pfam" id="PF01807">
    <property type="entry name" value="Zn_ribbon_DnaG"/>
    <property type="match status" value="1"/>
</dbReference>
<dbReference type="PIRSF" id="PIRSF002811">
    <property type="entry name" value="DnaG"/>
    <property type="match status" value="1"/>
</dbReference>
<dbReference type="SMART" id="SM00766">
    <property type="entry name" value="DnaG_DnaB_bind"/>
    <property type="match status" value="1"/>
</dbReference>
<dbReference type="SMART" id="SM00493">
    <property type="entry name" value="TOPRIM"/>
    <property type="match status" value="1"/>
</dbReference>
<dbReference type="SMART" id="SM00400">
    <property type="entry name" value="ZnF_CHCC"/>
    <property type="match status" value="1"/>
</dbReference>
<dbReference type="SUPFAM" id="SSF56731">
    <property type="entry name" value="DNA primase core"/>
    <property type="match status" value="1"/>
</dbReference>
<dbReference type="SUPFAM" id="SSF117023">
    <property type="entry name" value="DNA primase DnaG, C-terminal domain"/>
    <property type="match status" value="1"/>
</dbReference>
<dbReference type="SUPFAM" id="SSF57783">
    <property type="entry name" value="Zinc beta-ribbon"/>
    <property type="match status" value="1"/>
</dbReference>
<dbReference type="PROSITE" id="PS50880">
    <property type="entry name" value="TOPRIM"/>
    <property type="match status" value="1"/>
</dbReference>
<keyword id="KW-0235">DNA replication</keyword>
<keyword id="KW-0238">DNA-binding</keyword>
<keyword id="KW-0240">DNA-directed RNA polymerase</keyword>
<keyword id="KW-0460">Magnesium</keyword>
<keyword id="KW-0479">Metal-binding</keyword>
<keyword id="KW-0548">Nucleotidyltransferase</keyword>
<keyword id="KW-0639">Primosome</keyword>
<keyword id="KW-1185">Reference proteome</keyword>
<keyword id="KW-0804">Transcription</keyword>
<keyword id="KW-0808">Transferase</keyword>
<keyword id="KW-0862">Zinc</keyword>
<keyword id="KW-0863">Zinc-finger</keyword>